<dbReference type="EC" id="7.4.2.8" evidence="1"/>
<dbReference type="EMBL" id="CP000572">
    <property type="protein sequence ID" value="ABN89641.1"/>
    <property type="molecule type" value="Genomic_DNA"/>
</dbReference>
<dbReference type="RefSeq" id="WP_004536256.1">
    <property type="nucleotide sequence ID" value="NC_009076.1"/>
</dbReference>
<dbReference type="SMR" id="A3NZK5"/>
<dbReference type="KEGG" id="bpl:BURPS1106A_3540"/>
<dbReference type="HOGENOM" id="CLU_005314_3_0_4"/>
<dbReference type="Proteomes" id="UP000006738">
    <property type="component" value="Chromosome I"/>
</dbReference>
<dbReference type="GO" id="GO:0031522">
    <property type="term" value="C:cell envelope Sec protein transport complex"/>
    <property type="evidence" value="ECO:0007669"/>
    <property type="project" value="TreeGrafter"/>
</dbReference>
<dbReference type="GO" id="GO:0005829">
    <property type="term" value="C:cytosol"/>
    <property type="evidence" value="ECO:0007669"/>
    <property type="project" value="TreeGrafter"/>
</dbReference>
<dbReference type="GO" id="GO:0005886">
    <property type="term" value="C:plasma membrane"/>
    <property type="evidence" value="ECO:0007669"/>
    <property type="project" value="UniProtKB-SubCell"/>
</dbReference>
<dbReference type="GO" id="GO:0005524">
    <property type="term" value="F:ATP binding"/>
    <property type="evidence" value="ECO:0007669"/>
    <property type="project" value="UniProtKB-UniRule"/>
</dbReference>
<dbReference type="GO" id="GO:0046872">
    <property type="term" value="F:metal ion binding"/>
    <property type="evidence" value="ECO:0007669"/>
    <property type="project" value="UniProtKB-KW"/>
</dbReference>
<dbReference type="GO" id="GO:0008564">
    <property type="term" value="F:protein-exporting ATPase activity"/>
    <property type="evidence" value="ECO:0007669"/>
    <property type="project" value="UniProtKB-EC"/>
</dbReference>
<dbReference type="GO" id="GO:0065002">
    <property type="term" value="P:intracellular protein transmembrane transport"/>
    <property type="evidence" value="ECO:0007669"/>
    <property type="project" value="UniProtKB-UniRule"/>
</dbReference>
<dbReference type="GO" id="GO:0017038">
    <property type="term" value="P:protein import"/>
    <property type="evidence" value="ECO:0007669"/>
    <property type="project" value="InterPro"/>
</dbReference>
<dbReference type="GO" id="GO:0006605">
    <property type="term" value="P:protein targeting"/>
    <property type="evidence" value="ECO:0007669"/>
    <property type="project" value="UniProtKB-UniRule"/>
</dbReference>
<dbReference type="GO" id="GO:0043952">
    <property type="term" value="P:protein transport by the Sec complex"/>
    <property type="evidence" value="ECO:0007669"/>
    <property type="project" value="TreeGrafter"/>
</dbReference>
<dbReference type="CDD" id="cd17928">
    <property type="entry name" value="DEXDc_SecA"/>
    <property type="match status" value="1"/>
</dbReference>
<dbReference type="CDD" id="cd18803">
    <property type="entry name" value="SF2_C_secA"/>
    <property type="match status" value="1"/>
</dbReference>
<dbReference type="FunFam" id="3.40.50.300:FF:000081">
    <property type="entry name" value="Preprotein translocase subunit SecA"/>
    <property type="match status" value="1"/>
</dbReference>
<dbReference type="FunFam" id="3.40.50.300:FF:000113">
    <property type="entry name" value="Preprotein translocase subunit SecA"/>
    <property type="match status" value="1"/>
</dbReference>
<dbReference type="FunFam" id="3.90.1440.10:FF:000001">
    <property type="entry name" value="Preprotein translocase subunit SecA"/>
    <property type="match status" value="1"/>
</dbReference>
<dbReference type="FunFam" id="1.10.3060.10:FF:000003">
    <property type="entry name" value="Protein translocase subunit SecA"/>
    <property type="match status" value="1"/>
</dbReference>
<dbReference type="Gene3D" id="1.10.3060.10">
    <property type="entry name" value="Helical scaffold and wing domains of SecA"/>
    <property type="match status" value="1"/>
</dbReference>
<dbReference type="Gene3D" id="3.40.50.300">
    <property type="entry name" value="P-loop containing nucleotide triphosphate hydrolases"/>
    <property type="match status" value="2"/>
</dbReference>
<dbReference type="Gene3D" id="3.90.1440.10">
    <property type="entry name" value="SecA, preprotein cross-linking domain"/>
    <property type="match status" value="1"/>
</dbReference>
<dbReference type="HAMAP" id="MF_01382">
    <property type="entry name" value="SecA"/>
    <property type="match status" value="1"/>
</dbReference>
<dbReference type="InterPro" id="IPR014001">
    <property type="entry name" value="Helicase_ATP-bd"/>
</dbReference>
<dbReference type="InterPro" id="IPR001650">
    <property type="entry name" value="Helicase_C-like"/>
</dbReference>
<dbReference type="InterPro" id="IPR027417">
    <property type="entry name" value="P-loop_NTPase"/>
</dbReference>
<dbReference type="InterPro" id="IPR004027">
    <property type="entry name" value="SEC_C_motif"/>
</dbReference>
<dbReference type="InterPro" id="IPR000185">
    <property type="entry name" value="SecA"/>
</dbReference>
<dbReference type="InterPro" id="IPR020937">
    <property type="entry name" value="SecA_CS"/>
</dbReference>
<dbReference type="InterPro" id="IPR011115">
    <property type="entry name" value="SecA_DEAD"/>
</dbReference>
<dbReference type="InterPro" id="IPR014018">
    <property type="entry name" value="SecA_motor_DEAD"/>
</dbReference>
<dbReference type="InterPro" id="IPR011130">
    <property type="entry name" value="SecA_preprotein_X-link_dom"/>
</dbReference>
<dbReference type="InterPro" id="IPR044722">
    <property type="entry name" value="SecA_SF2_C"/>
</dbReference>
<dbReference type="InterPro" id="IPR011116">
    <property type="entry name" value="SecA_Wing/Scaffold"/>
</dbReference>
<dbReference type="InterPro" id="IPR036266">
    <property type="entry name" value="SecA_Wing/Scaffold_sf"/>
</dbReference>
<dbReference type="InterPro" id="IPR036670">
    <property type="entry name" value="SecA_X-link_sf"/>
</dbReference>
<dbReference type="NCBIfam" id="NF009538">
    <property type="entry name" value="PRK12904.1"/>
    <property type="match status" value="1"/>
</dbReference>
<dbReference type="NCBIfam" id="TIGR00963">
    <property type="entry name" value="secA"/>
    <property type="match status" value="1"/>
</dbReference>
<dbReference type="PANTHER" id="PTHR30612:SF0">
    <property type="entry name" value="CHLOROPLAST PROTEIN-TRANSPORTING ATPASE"/>
    <property type="match status" value="1"/>
</dbReference>
<dbReference type="PANTHER" id="PTHR30612">
    <property type="entry name" value="SECA INNER MEMBRANE COMPONENT OF SEC PROTEIN SECRETION SYSTEM"/>
    <property type="match status" value="1"/>
</dbReference>
<dbReference type="Pfam" id="PF21090">
    <property type="entry name" value="P-loop_SecA"/>
    <property type="match status" value="1"/>
</dbReference>
<dbReference type="Pfam" id="PF02810">
    <property type="entry name" value="SEC-C"/>
    <property type="match status" value="1"/>
</dbReference>
<dbReference type="Pfam" id="PF07517">
    <property type="entry name" value="SecA_DEAD"/>
    <property type="match status" value="1"/>
</dbReference>
<dbReference type="Pfam" id="PF01043">
    <property type="entry name" value="SecA_PP_bind"/>
    <property type="match status" value="1"/>
</dbReference>
<dbReference type="Pfam" id="PF07516">
    <property type="entry name" value="SecA_SW"/>
    <property type="match status" value="1"/>
</dbReference>
<dbReference type="PRINTS" id="PR00906">
    <property type="entry name" value="SECA"/>
</dbReference>
<dbReference type="SMART" id="SM00957">
    <property type="entry name" value="SecA_DEAD"/>
    <property type="match status" value="1"/>
</dbReference>
<dbReference type="SMART" id="SM00958">
    <property type="entry name" value="SecA_PP_bind"/>
    <property type="match status" value="1"/>
</dbReference>
<dbReference type="SUPFAM" id="SSF81886">
    <property type="entry name" value="Helical scaffold and wing domains of SecA"/>
    <property type="match status" value="1"/>
</dbReference>
<dbReference type="SUPFAM" id="SSF52540">
    <property type="entry name" value="P-loop containing nucleoside triphosphate hydrolases"/>
    <property type="match status" value="2"/>
</dbReference>
<dbReference type="SUPFAM" id="SSF81767">
    <property type="entry name" value="Pre-protein crosslinking domain of SecA"/>
    <property type="match status" value="1"/>
</dbReference>
<dbReference type="PROSITE" id="PS01312">
    <property type="entry name" value="SECA"/>
    <property type="match status" value="1"/>
</dbReference>
<dbReference type="PROSITE" id="PS51196">
    <property type="entry name" value="SECA_MOTOR_DEAD"/>
    <property type="match status" value="1"/>
</dbReference>
<proteinExistence type="inferred from homology"/>
<reference key="1">
    <citation type="journal article" date="2010" name="Genome Biol. Evol.">
        <title>Continuing evolution of Burkholderia mallei through genome reduction and large-scale rearrangements.</title>
        <authorList>
            <person name="Losada L."/>
            <person name="Ronning C.M."/>
            <person name="DeShazer D."/>
            <person name="Woods D."/>
            <person name="Fedorova N."/>
            <person name="Kim H.S."/>
            <person name="Shabalina S.A."/>
            <person name="Pearson T.R."/>
            <person name="Brinkac L."/>
            <person name="Tan P."/>
            <person name="Nandi T."/>
            <person name="Crabtree J."/>
            <person name="Badger J."/>
            <person name="Beckstrom-Sternberg S."/>
            <person name="Saqib M."/>
            <person name="Schutzer S.E."/>
            <person name="Keim P."/>
            <person name="Nierman W.C."/>
        </authorList>
    </citation>
    <scope>NUCLEOTIDE SEQUENCE [LARGE SCALE GENOMIC DNA]</scope>
    <source>
        <strain>1106a</strain>
    </source>
</reference>
<keyword id="KW-0067">ATP-binding</keyword>
<keyword id="KW-0997">Cell inner membrane</keyword>
<keyword id="KW-1003">Cell membrane</keyword>
<keyword id="KW-0963">Cytoplasm</keyword>
<keyword id="KW-0472">Membrane</keyword>
<keyword id="KW-0479">Metal-binding</keyword>
<keyword id="KW-0547">Nucleotide-binding</keyword>
<keyword id="KW-0653">Protein transport</keyword>
<keyword id="KW-1278">Translocase</keyword>
<keyword id="KW-0811">Translocation</keyword>
<keyword id="KW-0813">Transport</keyword>
<keyword id="KW-0862">Zinc</keyword>
<organism>
    <name type="scientific">Burkholderia pseudomallei (strain 1106a)</name>
    <dbReference type="NCBI Taxonomy" id="357348"/>
    <lineage>
        <taxon>Bacteria</taxon>
        <taxon>Pseudomonadati</taxon>
        <taxon>Pseudomonadota</taxon>
        <taxon>Betaproteobacteria</taxon>
        <taxon>Burkholderiales</taxon>
        <taxon>Burkholderiaceae</taxon>
        <taxon>Burkholderia</taxon>
        <taxon>pseudomallei group</taxon>
    </lineage>
</organism>
<gene>
    <name evidence="1" type="primary">secA</name>
    <name type="ordered locus">BURPS1106A_3540</name>
</gene>
<accession>A3NZK5</accession>
<sequence>MTTGFLQKIFGSRNQRLVKQYQKTVAAINALETQIETLTDDQLRGKTGEFRQRIAAGESLDKLLPEAFAVCREASRRVLKMRHFDVQMIGGMVLHYGKIAEMRTGEGKTLVATLAAYLNALAGRGVHVVTVNDYLAQRDAEWMGRLYNFLGLSVGINLSGMEHDQKQAAYAADITYGTNNEFGFDYLRDNMVYETDSRVQRPLNFAVVDEVDSILIDEARTPLIISGQAEDHTELYVRMNALPPLLERQIGEEKADGTGVEKPGDYTLDEKGRQVFLTESGHEKAERMLAEWGLIGDGESLYAPQNITLMHHVYAALRAHTLFHRDQHYVVQNDEVIIVDEFTGRLMPGRRWSDGLHQAVEAKEHVKIQSENQTLASITFQNYFRMYAKLSGMTGTADTEAYEFNEIYGLETVVIPTNRPPKRIDKQDQIYKTAKERYDAVIRDIRECHERGQPVLVGTTSIENSELLSHLLKQAGLPHEVLNAKQHAREAAIVAEAGRPKRITIATNMAGRGTDIVLGGNVEKQAAFIEADESIPADEKARRIQQLHDEWETLHEQVKTAGGLHIIGTERHESRRIDNQLRGRAGRQGDPGSSRFYLSLEDPLLRIFAGDRVRAIMDRLKMPEGEAIEAGIVTRSIESAQRKVEARNFDIRKQLLEYDDVSNDQRKVIYQQRNELLEAHDIAETIGAMRHGVISEVVRQFVPAGSIEEQWDLPELEETLRNDWQLDLAIQEMVNESSSINADEILDAVTTAADEHYEAKVALVGRESFSAFERSIMLQTLDRLWREHLAALDHLRQGIHLRGYAQKNPKQEYKREAFELFAAMLDAVKQEVTRIVMNVQIQSPEQLEEAAEQIEEQGGQLGNVEFQHADFAAAAAAATAGGAVVADATAEMVSHAMSHSGPAGEVPRVGRNDPCPCGSGKKYKHCHGKLN</sequence>
<name>SECA_BURP0</name>
<protein>
    <recommendedName>
        <fullName evidence="1">Protein translocase subunit SecA</fullName>
        <ecNumber evidence="1">7.4.2.8</ecNumber>
    </recommendedName>
</protein>
<comment type="function">
    <text evidence="1">Part of the Sec protein translocase complex. Interacts with the SecYEG preprotein conducting channel. Has a central role in coupling the hydrolysis of ATP to the transfer of proteins into and across the cell membrane, serving both as a receptor for the preprotein-SecB complex and as an ATP-driven molecular motor driving the stepwise translocation of polypeptide chains across the membrane.</text>
</comment>
<comment type="catalytic activity">
    <reaction evidence="1">
        <text>ATP + H2O + cellular proteinSide 1 = ADP + phosphate + cellular proteinSide 2.</text>
        <dbReference type="EC" id="7.4.2.8"/>
    </reaction>
</comment>
<comment type="cofactor">
    <cofactor evidence="1">
        <name>Zn(2+)</name>
        <dbReference type="ChEBI" id="CHEBI:29105"/>
    </cofactor>
    <text evidence="1">May bind 1 zinc ion per subunit.</text>
</comment>
<comment type="subunit">
    <text evidence="1">Monomer and homodimer. Part of the essential Sec protein translocation apparatus which comprises SecA, SecYEG and auxiliary proteins SecDF-YajC and YidC.</text>
</comment>
<comment type="subcellular location">
    <subcellularLocation>
        <location evidence="1">Cell inner membrane</location>
        <topology evidence="1">Peripheral membrane protein</topology>
        <orientation evidence="1">Cytoplasmic side</orientation>
    </subcellularLocation>
    <subcellularLocation>
        <location evidence="1">Cytoplasm</location>
    </subcellularLocation>
    <text evidence="1">Distribution is 50-50.</text>
</comment>
<comment type="similarity">
    <text evidence="1">Belongs to the SecA family.</text>
</comment>
<evidence type="ECO:0000255" key="1">
    <source>
        <dbReference type="HAMAP-Rule" id="MF_01382"/>
    </source>
</evidence>
<feature type="chain" id="PRO_0000320754" description="Protein translocase subunit SecA">
    <location>
        <begin position="1"/>
        <end position="931"/>
    </location>
</feature>
<feature type="binding site" evidence="1">
    <location>
        <position position="87"/>
    </location>
    <ligand>
        <name>ATP</name>
        <dbReference type="ChEBI" id="CHEBI:30616"/>
    </ligand>
</feature>
<feature type="binding site" evidence="1">
    <location>
        <begin position="105"/>
        <end position="109"/>
    </location>
    <ligand>
        <name>ATP</name>
        <dbReference type="ChEBI" id="CHEBI:30616"/>
    </ligand>
</feature>
<feature type="binding site" evidence="1">
    <location>
        <position position="515"/>
    </location>
    <ligand>
        <name>ATP</name>
        <dbReference type="ChEBI" id="CHEBI:30616"/>
    </ligand>
</feature>
<feature type="binding site" evidence="1">
    <location>
        <position position="915"/>
    </location>
    <ligand>
        <name>Zn(2+)</name>
        <dbReference type="ChEBI" id="CHEBI:29105"/>
    </ligand>
</feature>
<feature type="binding site" evidence="1">
    <location>
        <position position="917"/>
    </location>
    <ligand>
        <name>Zn(2+)</name>
        <dbReference type="ChEBI" id="CHEBI:29105"/>
    </ligand>
</feature>
<feature type="binding site" evidence="1">
    <location>
        <position position="926"/>
    </location>
    <ligand>
        <name>Zn(2+)</name>
        <dbReference type="ChEBI" id="CHEBI:29105"/>
    </ligand>
</feature>
<feature type="binding site" evidence="1">
    <location>
        <position position="927"/>
    </location>
    <ligand>
        <name>Zn(2+)</name>
        <dbReference type="ChEBI" id="CHEBI:29105"/>
    </ligand>
</feature>